<gene>
    <name evidence="1" type="primary">nuoC</name>
    <name type="ordered locus">Bcen2424_2247</name>
</gene>
<dbReference type="EC" id="7.1.1.-" evidence="1"/>
<dbReference type="EMBL" id="CP000458">
    <property type="protein sequence ID" value="ABK08998.1"/>
    <property type="molecule type" value="Genomic_DNA"/>
</dbReference>
<dbReference type="RefSeq" id="WP_006478264.1">
    <property type="nucleotide sequence ID" value="NC_008542.1"/>
</dbReference>
<dbReference type="SMR" id="A0K921"/>
<dbReference type="KEGG" id="bch:Bcen2424_2247"/>
<dbReference type="HOGENOM" id="CLU_042628_2_1_4"/>
<dbReference type="GO" id="GO:0005886">
    <property type="term" value="C:plasma membrane"/>
    <property type="evidence" value="ECO:0007669"/>
    <property type="project" value="UniProtKB-SubCell"/>
</dbReference>
<dbReference type="GO" id="GO:0008137">
    <property type="term" value="F:NADH dehydrogenase (ubiquinone) activity"/>
    <property type="evidence" value="ECO:0007669"/>
    <property type="project" value="InterPro"/>
</dbReference>
<dbReference type="GO" id="GO:0050136">
    <property type="term" value="F:NADH:ubiquinone reductase (non-electrogenic) activity"/>
    <property type="evidence" value="ECO:0007669"/>
    <property type="project" value="UniProtKB-UniRule"/>
</dbReference>
<dbReference type="GO" id="GO:0048038">
    <property type="term" value="F:quinone binding"/>
    <property type="evidence" value="ECO:0007669"/>
    <property type="project" value="UniProtKB-KW"/>
</dbReference>
<dbReference type="Gene3D" id="3.30.460.80">
    <property type="entry name" value="NADH:ubiquinone oxidoreductase, 30kDa subunit"/>
    <property type="match status" value="1"/>
</dbReference>
<dbReference type="HAMAP" id="MF_01357">
    <property type="entry name" value="NDH1_NuoC"/>
    <property type="match status" value="1"/>
</dbReference>
<dbReference type="InterPro" id="IPR010218">
    <property type="entry name" value="NADH_DH_suC"/>
</dbReference>
<dbReference type="InterPro" id="IPR037232">
    <property type="entry name" value="NADH_quin_OxRdtase_su_C/D-like"/>
</dbReference>
<dbReference type="InterPro" id="IPR001268">
    <property type="entry name" value="NADH_UbQ_OxRdtase_30kDa_su"/>
</dbReference>
<dbReference type="InterPro" id="IPR020396">
    <property type="entry name" value="NADH_UbQ_OxRdtase_CS"/>
</dbReference>
<dbReference type="NCBIfam" id="TIGR01961">
    <property type="entry name" value="NuoC_fam"/>
    <property type="match status" value="1"/>
</dbReference>
<dbReference type="NCBIfam" id="NF004730">
    <property type="entry name" value="PRK06074.1-1"/>
    <property type="match status" value="1"/>
</dbReference>
<dbReference type="PANTHER" id="PTHR10884:SF14">
    <property type="entry name" value="NADH DEHYDROGENASE [UBIQUINONE] IRON-SULFUR PROTEIN 3, MITOCHONDRIAL"/>
    <property type="match status" value="1"/>
</dbReference>
<dbReference type="PANTHER" id="PTHR10884">
    <property type="entry name" value="NADH DEHYDROGENASE UBIQUINONE IRON-SULFUR PROTEIN 3"/>
    <property type="match status" value="1"/>
</dbReference>
<dbReference type="Pfam" id="PF00329">
    <property type="entry name" value="Complex1_30kDa"/>
    <property type="match status" value="1"/>
</dbReference>
<dbReference type="SUPFAM" id="SSF143243">
    <property type="entry name" value="Nqo5-like"/>
    <property type="match status" value="1"/>
</dbReference>
<dbReference type="PROSITE" id="PS00542">
    <property type="entry name" value="COMPLEX1_30K"/>
    <property type="match status" value="1"/>
</dbReference>
<reference key="1">
    <citation type="submission" date="2006-08" db="EMBL/GenBank/DDBJ databases">
        <title>Complete sequence of chromosome 1 of Burkholderia cenocepacia HI2424.</title>
        <authorList>
            <person name="Copeland A."/>
            <person name="Lucas S."/>
            <person name="Lapidus A."/>
            <person name="Barry K."/>
            <person name="Detter J.C."/>
            <person name="Glavina del Rio T."/>
            <person name="Hammon N."/>
            <person name="Israni S."/>
            <person name="Pitluck S."/>
            <person name="Chain P."/>
            <person name="Malfatti S."/>
            <person name="Shin M."/>
            <person name="Vergez L."/>
            <person name="Schmutz J."/>
            <person name="Larimer F."/>
            <person name="Land M."/>
            <person name="Hauser L."/>
            <person name="Kyrpides N."/>
            <person name="Kim E."/>
            <person name="LiPuma J.J."/>
            <person name="Gonzalez C.F."/>
            <person name="Konstantinidis K."/>
            <person name="Tiedje J.M."/>
            <person name="Richardson P."/>
        </authorList>
    </citation>
    <scope>NUCLEOTIDE SEQUENCE [LARGE SCALE GENOMIC DNA]</scope>
    <source>
        <strain>HI2424</strain>
    </source>
</reference>
<feature type="chain" id="PRO_0000358061" description="NADH-quinone oxidoreductase subunit C">
    <location>
        <begin position="1"/>
        <end position="200"/>
    </location>
</feature>
<organism>
    <name type="scientific">Burkholderia cenocepacia (strain HI2424)</name>
    <dbReference type="NCBI Taxonomy" id="331272"/>
    <lineage>
        <taxon>Bacteria</taxon>
        <taxon>Pseudomonadati</taxon>
        <taxon>Pseudomonadota</taxon>
        <taxon>Betaproteobacteria</taxon>
        <taxon>Burkholderiales</taxon>
        <taxon>Burkholderiaceae</taxon>
        <taxon>Burkholderia</taxon>
        <taxon>Burkholderia cepacia complex</taxon>
    </lineage>
</organism>
<sequence>MASKIETLKANLEAALGARVVSLTEAIGELTLVVKASDYLEVAKTLRDDPKLRFEQLIDLCGVDYQTFGDGAYDGPRFAAVSHLLSVTNNWRLRLRAFAPDDDLPIVASLVDIWTSANWYEREAFDLYGIVFEGHPDLRRILTDYGFIGHPFRKDFPVSGYVEMRYDPEEKRVVYQPVTIEPREITPRVIREDRYGGLKH</sequence>
<name>NUOC_BURCH</name>
<accession>A0K921</accession>
<evidence type="ECO:0000255" key="1">
    <source>
        <dbReference type="HAMAP-Rule" id="MF_01357"/>
    </source>
</evidence>
<comment type="function">
    <text evidence="1">NDH-1 shuttles electrons from NADH, via FMN and iron-sulfur (Fe-S) centers, to quinones in the respiratory chain. The immediate electron acceptor for the enzyme in this species is believed to be ubiquinone. Couples the redox reaction to proton translocation (for every two electrons transferred, four hydrogen ions are translocated across the cytoplasmic membrane), and thus conserves the redox energy in a proton gradient.</text>
</comment>
<comment type="catalytic activity">
    <reaction evidence="1">
        <text>a quinone + NADH + 5 H(+)(in) = a quinol + NAD(+) + 4 H(+)(out)</text>
        <dbReference type="Rhea" id="RHEA:57888"/>
        <dbReference type="ChEBI" id="CHEBI:15378"/>
        <dbReference type="ChEBI" id="CHEBI:24646"/>
        <dbReference type="ChEBI" id="CHEBI:57540"/>
        <dbReference type="ChEBI" id="CHEBI:57945"/>
        <dbReference type="ChEBI" id="CHEBI:132124"/>
    </reaction>
</comment>
<comment type="subunit">
    <text evidence="1">NDH-1 is composed of 14 different subunits. Subunits NuoB, C, D, E, F, and G constitute the peripheral sector of the complex.</text>
</comment>
<comment type="subcellular location">
    <subcellularLocation>
        <location evidence="1">Cell inner membrane</location>
        <topology evidence="1">Peripheral membrane protein</topology>
        <orientation evidence="1">Cytoplasmic side</orientation>
    </subcellularLocation>
</comment>
<comment type="similarity">
    <text evidence="1">Belongs to the complex I 30 kDa subunit family.</text>
</comment>
<keyword id="KW-0997">Cell inner membrane</keyword>
<keyword id="KW-1003">Cell membrane</keyword>
<keyword id="KW-0472">Membrane</keyword>
<keyword id="KW-0520">NAD</keyword>
<keyword id="KW-0874">Quinone</keyword>
<keyword id="KW-1278">Translocase</keyword>
<keyword id="KW-0813">Transport</keyword>
<keyword id="KW-0830">Ubiquinone</keyword>
<proteinExistence type="inferred from homology"/>
<protein>
    <recommendedName>
        <fullName evidence="1">NADH-quinone oxidoreductase subunit C</fullName>
        <ecNumber evidence="1">7.1.1.-</ecNumber>
    </recommendedName>
    <alternativeName>
        <fullName evidence="1">NADH dehydrogenase I subunit C</fullName>
    </alternativeName>
    <alternativeName>
        <fullName evidence="1">NDH-1 subunit C</fullName>
    </alternativeName>
</protein>